<proteinExistence type="predicted"/>
<geneLocation type="mitochondrion"/>
<reference key="1">
    <citation type="journal article" date="2000" name="Mol. Gen. Genet.">
        <title>The mitochondrial DNA of Dictyostelium discoideum: complete sequence, gene content and genome organization.</title>
        <authorList>
            <person name="Ogawa S."/>
            <person name="Yoshino R."/>
            <person name="Angata K."/>
            <person name="Iwamoto M."/>
            <person name="Pi M."/>
            <person name="Kuroe K."/>
            <person name="Matsuo K."/>
            <person name="Morio T."/>
            <person name="Urushihara H."/>
            <person name="Yanagisawa K."/>
            <person name="Tanaka Y."/>
        </authorList>
    </citation>
    <scope>NUCLEOTIDE SEQUENCE [LARGE SCALE GENOMIC DNA]</scope>
    <source>
        <strain>AX3</strain>
    </source>
</reference>
<reference key="2">
    <citation type="journal article" date="1998" name="Curr. Genet.">
        <title>A ribosomal protein gene cluster is encoded in the mitochondrial DNA of Dictyostelium discoideum: UGA termination codons and similarity of gene order to Acanthamoeba castellanii.</title>
        <authorList>
            <person name="Iwamoto M."/>
            <person name="Pi M."/>
            <person name="Kurihara M."/>
            <person name="Morio T."/>
            <person name="Tanaka Y."/>
        </authorList>
    </citation>
    <scope>NUCLEOTIDE SEQUENCE [GENOMIC DNA] OF 1-716</scope>
    <scope>IDENTIFICATION</scope>
    <source>
        <strain>AX3</strain>
    </source>
</reference>
<reference key="3">
    <citation type="journal article" date="1994" name="J. Mol. Evol.">
        <title>The Dictyostelium discoideum mitochondrial genome: a primordial system using the universal code and encoding hydrophilic proteins atypical of metazoan mitochondrial DNA.</title>
        <authorList>
            <person name="Cole R.A."/>
            <person name="Williams K.L."/>
        </authorList>
    </citation>
    <scope>NUCLEOTIDE SEQUENCE [GENOMIC DNA] OF 693-796</scope>
    <source>
        <strain>X22</strain>
    </source>
</reference>
<protein>
    <recommendedName>
        <fullName>Uncharacterized mitochondrial protein Mp36</fullName>
    </recommendedName>
    <alternativeName>
        <fullName>ORF796</fullName>
    </alternativeName>
</protein>
<sequence length="796" mass="93996">MIGINKMIIQRTELYTTTGVVKSTIHGNIINISFNRNIQYQYRQISNKNKNRNLSPRVLNLKEKGTARVTKLNKNRKKGMRVVQKKDILNAKLNVQTPIVVEEIKNISFASQMVHKEHDNLPTLRSKQRMLLKAYFDQLRINNLKAVNNIFTLKKRVLNLKSNYLIVTYSPKGTKVNKANVLQQLLKYKQYFTKKWAFKLKARVTKTNFIKTQIALEKQKVRNIAQPCYISLNQKINKKLQKLQKQKLVLTSKAKLQRFKKQRYLFLKSQSKLDIDLLLIELKKKARQSKIKYKRRTKKKVKSVKVIEELKDFVALEEEMEAYYKTPVETIMSSIVTKYTENAKPLILKNLQQKLRVKEYLQYSQIRRLIDITNEKELYKNKELSKRNEKKLKKSIQQKFLKTVVIAVNHKKNQQKDSKKELIIKVLLNILRRKGEVPFEGKIDMVLPYLKELGRKQDDAKMNNLALNLQMRIVTDLLNYKGDTEVKNNHVALVRKRIDYLNYMSQNPRRSRNAGPRSDYKVIGKAKYQGKMMYAKLTEQRKMLENVALKNNYNILNNIIESEKKLYKLRLPKQRVTVPTLYQIYERVINHIKGFERKTQGVYSKAKKFQNILTKLQAIKRNKKGTIKKRRLKKAQEETTAPVTIPLTQGVLRITLKKKNMFLVLQNLSTKHIDTTVTARQEYYRIYNPKEIDPLEKKKKQALKLTALKPLGPIGRVIGTDLFRRRVITQVLLNLKAQIKYNVLDIEIRKPGFHSIINTILYKLWYIYEDQGLLRMYKFTKNKAHGSMRKKKHRRL</sequence>
<name>MP36_DICDI</name>
<accession>Q9TGM3</accession>
<accession>O21040</accession>
<accession>Q34311</accession>
<organism>
    <name type="scientific">Dictyostelium discoideum</name>
    <name type="common">Social amoeba</name>
    <dbReference type="NCBI Taxonomy" id="44689"/>
    <lineage>
        <taxon>Eukaryota</taxon>
        <taxon>Amoebozoa</taxon>
        <taxon>Evosea</taxon>
        <taxon>Eumycetozoa</taxon>
        <taxon>Dictyostelia</taxon>
        <taxon>Dictyosteliales</taxon>
        <taxon>Dictyosteliaceae</taxon>
        <taxon>Dictyostelium</taxon>
    </lineage>
</organism>
<feature type="chain" id="PRO_0000312427" description="Uncharacterized mitochondrial protein Mp36">
    <location>
        <begin position="1"/>
        <end position="796"/>
    </location>
</feature>
<evidence type="ECO:0000305" key="1"/>
<gene>
    <name type="primary">DidioMp36</name>
    <name type="ORF">DDB_G0294054</name>
</gene>
<dbReference type="EMBL" id="AB000109">
    <property type="protein sequence ID" value="BAA78085.1"/>
    <property type="molecule type" value="Genomic_DNA"/>
</dbReference>
<dbReference type="EMBL" id="D63523">
    <property type="protein sequence ID" value="BAA23577.1"/>
    <property type="molecule type" value="Genomic_DNA"/>
</dbReference>
<dbReference type="EMBL" id="U02291">
    <property type="protein sequence ID" value="AAA77666.1"/>
    <property type="status" value="ALT_FRAME"/>
    <property type="molecule type" value="Genomic_DNA"/>
</dbReference>
<dbReference type="PIR" id="T43782">
    <property type="entry name" value="T43782"/>
</dbReference>
<dbReference type="RefSeq" id="NP_050103.1">
    <property type="nucleotide sequence ID" value="NC_000895.1"/>
</dbReference>
<dbReference type="STRING" id="44689.Q9TGM3"/>
<dbReference type="GeneID" id="2193949"/>
<dbReference type="KEGG" id="ddi:DidioMp36"/>
<dbReference type="dictyBase" id="DDB_G0294054">
    <property type="gene designation" value="DidioMp36"/>
</dbReference>
<dbReference type="VEuPathDB" id="AmoebaDB:DidioMp36"/>
<dbReference type="InParanoid" id="Q9TGM3"/>
<dbReference type="PRO" id="PR:Q9TGM3"/>
<dbReference type="Proteomes" id="UP000002195">
    <property type="component" value="Mitochondrion"/>
</dbReference>
<dbReference type="GO" id="GO:0005739">
    <property type="term" value="C:mitochondrion"/>
    <property type="evidence" value="ECO:0007669"/>
    <property type="project" value="UniProtKB-SubCell"/>
</dbReference>
<comment type="subcellular location">
    <subcellularLocation>
        <location>Mitochondrion</location>
    </subcellularLocation>
</comment>
<comment type="miscellaneous">
    <text>Found in a 14.5 kb cluster region located downstream from rpl11 gene and upstream of orf796.</text>
</comment>
<comment type="sequence caution" evidence="1">
    <conflict type="frameshift">
        <sequence resource="EMBL-CDS" id="AAA77666"/>
    </conflict>
</comment>
<keyword id="KW-0496">Mitochondrion</keyword>
<keyword id="KW-1185">Reference proteome</keyword>